<name>RBFA_LACCB</name>
<feature type="chain" id="PRO_1000088898" description="Ribosome-binding factor A">
    <location>
        <begin position="1"/>
        <end position="117"/>
    </location>
</feature>
<evidence type="ECO:0000255" key="1">
    <source>
        <dbReference type="HAMAP-Rule" id="MF_00003"/>
    </source>
</evidence>
<organism>
    <name type="scientific">Lacticaseibacillus casei (strain BL23)</name>
    <name type="common">Lactobacillus casei</name>
    <dbReference type="NCBI Taxonomy" id="543734"/>
    <lineage>
        <taxon>Bacteria</taxon>
        <taxon>Bacillati</taxon>
        <taxon>Bacillota</taxon>
        <taxon>Bacilli</taxon>
        <taxon>Lactobacillales</taxon>
        <taxon>Lactobacillaceae</taxon>
        <taxon>Lacticaseibacillus</taxon>
    </lineage>
</organism>
<keyword id="KW-0963">Cytoplasm</keyword>
<keyword id="KW-0690">Ribosome biogenesis</keyword>
<accession>B3WER4</accession>
<sequence>MKHRIGRVETQIQREVDDILLKDVNDPRVKGVTITGVKLTGDLQHATIFYSILDDAPDKVEAAQTGLDKASGLIRREVGQRIRLFKVPEIEFAQDKSVQYGARIDQLINEVRRKNLE</sequence>
<proteinExistence type="inferred from homology"/>
<reference key="1">
    <citation type="submission" date="2008-06" db="EMBL/GenBank/DDBJ databases">
        <title>Lactobacillus casei BL23 complete genome sequence.</title>
        <authorList>
            <person name="Maze A."/>
            <person name="Boel G."/>
            <person name="Bourand A."/>
            <person name="Loux V."/>
            <person name="Gibrat J.F."/>
            <person name="Zuniga M."/>
            <person name="Hartke A."/>
            <person name="Deutscher J."/>
        </authorList>
    </citation>
    <scope>NUCLEOTIDE SEQUENCE [LARGE SCALE GENOMIC DNA]</scope>
    <source>
        <strain>BL23</strain>
    </source>
</reference>
<dbReference type="EMBL" id="FM177140">
    <property type="protein sequence ID" value="CAQ66865.1"/>
    <property type="molecule type" value="Genomic_DNA"/>
</dbReference>
<dbReference type="SMR" id="B3WER4"/>
<dbReference type="KEGG" id="lcb:LCABL_17850"/>
<dbReference type="HOGENOM" id="CLU_089475_3_0_9"/>
<dbReference type="GO" id="GO:0005829">
    <property type="term" value="C:cytosol"/>
    <property type="evidence" value="ECO:0007669"/>
    <property type="project" value="TreeGrafter"/>
</dbReference>
<dbReference type="GO" id="GO:0043024">
    <property type="term" value="F:ribosomal small subunit binding"/>
    <property type="evidence" value="ECO:0007669"/>
    <property type="project" value="TreeGrafter"/>
</dbReference>
<dbReference type="GO" id="GO:0030490">
    <property type="term" value="P:maturation of SSU-rRNA"/>
    <property type="evidence" value="ECO:0007669"/>
    <property type="project" value="UniProtKB-UniRule"/>
</dbReference>
<dbReference type="Gene3D" id="3.30.300.20">
    <property type="match status" value="1"/>
</dbReference>
<dbReference type="HAMAP" id="MF_00003">
    <property type="entry name" value="RbfA"/>
    <property type="match status" value="1"/>
</dbReference>
<dbReference type="InterPro" id="IPR015946">
    <property type="entry name" value="KH_dom-like_a/b"/>
</dbReference>
<dbReference type="InterPro" id="IPR000238">
    <property type="entry name" value="RbfA"/>
</dbReference>
<dbReference type="InterPro" id="IPR023799">
    <property type="entry name" value="RbfA_dom_sf"/>
</dbReference>
<dbReference type="InterPro" id="IPR020053">
    <property type="entry name" value="Ribosome-bd_factorA_CS"/>
</dbReference>
<dbReference type="NCBIfam" id="TIGR00082">
    <property type="entry name" value="rbfA"/>
    <property type="match status" value="1"/>
</dbReference>
<dbReference type="PANTHER" id="PTHR33515">
    <property type="entry name" value="RIBOSOME-BINDING FACTOR A, CHLOROPLASTIC-RELATED"/>
    <property type="match status" value="1"/>
</dbReference>
<dbReference type="PANTHER" id="PTHR33515:SF1">
    <property type="entry name" value="RIBOSOME-BINDING FACTOR A, CHLOROPLASTIC-RELATED"/>
    <property type="match status" value="1"/>
</dbReference>
<dbReference type="Pfam" id="PF02033">
    <property type="entry name" value="RBFA"/>
    <property type="match status" value="1"/>
</dbReference>
<dbReference type="SUPFAM" id="SSF89919">
    <property type="entry name" value="Ribosome-binding factor A, RbfA"/>
    <property type="match status" value="1"/>
</dbReference>
<dbReference type="PROSITE" id="PS01319">
    <property type="entry name" value="RBFA"/>
    <property type="match status" value="1"/>
</dbReference>
<gene>
    <name evidence="1" type="primary">rbfA</name>
    <name type="ordered locus">LCABL_17850</name>
</gene>
<protein>
    <recommendedName>
        <fullName evidence="1">Ribosome-binding factor A</fullName>
    </recommendedName>
</protein>
<comment type="function">
    <text evidence="1">One of several proteins that assist in the late maturation steps of the functional core of the 30S ribosomal subunit. Associates with free 30S ribosomal subunits (but not with 30S subunits that are part of 70S ribosomes or polysomes). Required for efficient processing of 16S rRNA. May interact with the 5'-terminal helix region of 16S rRNA.</text>
</comment>
<comment type="subunit">
    <text evidence="1">Monomer. Binds 30S ribosomal subunits, but not 50S ribosomal subunits or 70S ribosomes.</text>
</comment>
<comment type="subcellular location">
    <subcellularLocation>
        <location evidence="1">Cytoplasm</location>
    </subcellularLocation>
</comment>
<comment type="similarity">
    <text evidence="1">Belongs to the RbfA family.</text>
</comment>